<comment type="catalytic activity">
    <reaction>
        <text>tRNA(Cys) + L-cysteine + ATP = L-cysteinyl-tRNA(Cys) + AMP + diphosphate</text>
        <dbReference type="Rhea" id="RHEA:17773"/>
        <dbReference type="Rhea" id="RHEA-COMP:9661"/>
        <dbReference type="Rhea" id="RHEA-COMP:9679"/>
        <dbReference type="ChEBI" id="CHEBI:30616"/>
        <dbReference type="ChEBI" id="CHEBI:33019"/>
        <dbReference type="ChEBI" id="CHEBI:35235"/>
        <dbReference type="ChEBI" id="CHEBI:78442"/>
        <dbReference type="ChEBI" id="CHEBI:78517"/>
        <dbReference type="ChEBI" id="CHEBI:456215"/>
        <dbReference type="EC" id="6.1.1.16"/>
    </reaction>
</comment>
<comment type="cofactor">
    <cofactor evidence="1">
        <name>Zn(2+)</name>
        <dbReference type="ChEBI" id="CHEBI:29105"/>
    </cofactor>
    <text evidence="1">Binds 1 zinc ion per subunit.</text>
</comment>
<comment type="subcellular location">
    <subcellularLocation>
        <location evidence="1">Cytoplasm</location>
    </subcellularLocation>
</comment>
<comment type="similarity">
    <text evidence="2">Belongs to the class-I aminoacyl-tRNA synthetase family.</text>
</comment>
<proteinExistence type="inferred from homology"/>
<sequence length="467" mass="54790">MEVYNTLSRKIEKLEDIVDGKRVKMYVCGITAYDYSHIGHARSAVFFDVFRRYLEYLGYEVVYVQNFTDVDDKIINRAVKEGKTQKEVAEKFIEEYLKDMEALNVKKPTYQPKVTEHIPDIIEFIQNLIEKGYAYVIDGDVYFHVPAFEHYGELSKQSLEELNRHRIEPDERKRDVKDFALWKSAKEADLKAQAVFDSPWGRGRPGWHIECSVMSAKYLGVPFDIHGGGKDLIFPHHENERAQSFARFGVEPVKIWVHNDFIRIKGEKMSKSLGNIVRIRDVLQRYEGEVLRYFLLTAHYRSPLDYTEEALERAKRAYEYLRSALINLDMEIAYLKTFGDRKEGNQVDVEDYIRRFEEAMNRDLHTPDAIAVLHEFAGLINKSLYELSLNQAEELYEAFKRLCGVLGLFEKMERVPALSREDAEKVVERERARKERNFELADAIRDEFAKRGIRLIDTPKGTRWRVE</sequence>
<protein>
    <recommendedName>
        <fullName>Cysteine--tRNA ligase</fullName>
        <ecNumber>6.1.1.16</ecNumber>
    </recommendedName>
    <alternativeName>
        <fullName>Cysteinyl-tRNA synthetase</fullName>
        <shortName>CysRS</shortName>
    </alternativeName>
</protein>
<keyword id="KW-0030">Aminoacyl-tRNA synthetase</keyword>
<keyword id="KW-0067">ATP-binding</keyword>
<keyword id="KW-0963">Cytoplasm</keyword>
<keyword id="KW-0436">Ligase</keyword>
<keyword id="KW-0479">Metal-binding</keyword>
<keyword id="KW-0547">Nucleotide-binding</keyword>
<keyword id="KW-0648">Protein biosynthesis</keyword>
<keyword id="KW-1185">Reference proteome</keyword>
<keyword id="KW-0862">Zinc</keyword>
<evidence type="ECO:0000250" key="1"/>
<evidence type="ECO:0000305" key="2"/>
<gene>
    <name type="primary">cysS</name>
    <name type="ordered locus">AF_0411</name>
</gene>
<feature type="chain" id="PRO_0000159533" description="Cysteine--tRNA ligase">
    <location>
        <begin position="1"/>
        <end position="467"/>
    </location>
</feature>
<feature type="short sequence motif" description="'HIGH' region">
    <location>
        <begin position="30"/>
        <end position="40"/>
    </location>
</feature>
<feature type="short sequence motif" description="'KMSKS' region">
    <location>
        <begin position="268"/>
        <end position="272"/>
    </location>
</feature>
<feature type="binding site" evidence="1">
    <location>
        <position position="28"/>
    </location>
    <ligand>
        <name>Zn(2+)</name>
        <dbReference type="ChEBI" id="CHEBI:29105"/>
    </ligand>
</feature>
<feature type="binding site" evidence="1">
    <location>
        <position position="211"/>
    </location>
    <ligand>
        <name>Zn(2+)</name>
        <dbReference type="ChEBI" id="CHEBI:29105"/>
    </ligand>
</feature>
<feature type="binding site" evidence="1">
    <location>
        <position position="236"/>
    </location>
    <ligand>
        <name>Zn(2+)</name>
        <dbReference type="ChEBI" id="CHEBI:29105"/>
    </ligand>
</feature>
<feature type="binding site" evidence="1">
    <location>
        <position position="240"/>
    </location>
    <ligand>
        <name>Zn(2+)</name>
        <dbReference type="ChEBI" id="CHEBI:29105"/>
    </ligand>
</feature>
<feature type="binding site" evidence="1">
    <location>
        <position position="271"/>
    </location>
    <ligand>
        <name>ATP</name>
        <dbReference type="ChEBI" id="CHEBI:30616"/>
    </ligand>
</feature>
<name>SYC_ARCFU</name>
<dbReference type="EC" id="6.1.1.16"/>
<dbReference type="EMBL" id="AE000782">
    <property type="protein sequence ID" value="AAB90823.1"/>
    <property type="molecule type" value="Genomic_DNA"/>
</dbReference>
<dbReference type="PIR" id="C69301">
    <property type="entry name" value="C69301"/>
</dbReference>
<dbReference type="RefSeq" id="WP_010877918.1">
    <property type="nucleotide sequence ID" value="NC_000917.1"/>
</dbReference>
<dbReference type="SMR" id="O29836"/>
<dbReference type="STRING" id="224325.AF_0411"/>
<dbReference type="PaxDb" id="224325-AF_0411"/>
<dbReference type="EnsemblBacteria" id="AAB90823">
    <property type="protein sequence ID" value="AAB90823"/>
    <property type="gene ID" value="AF_0411"/>
</dbReference>
<dbReference type="GeneID" id="1483627"/>
<dbReference type="KEGG" id="afu:AF_0411"/>
<dbReference type="eggNOG" id="arCOG00486">
    <property type="taxonomic scope" value="Archaea"/>
</dbReference>
<dbReference type="HOGENOM" id="CLU_013528_0_1_2"/>
<dbReference type="OrthoDB" id="9445at2157"/>
<dbReference type="PhylomeDB" id="O29836"/>
<dbReference type="Proteomes" id="UP000002199">
    <property type="component" value="Chromosome"/>
</dbReference>
<dbReference type="GO" id="GO:0005737">
    <property type="term" value="C:cytoplasm"/>
    <property type="evidence" value="ECO:0007669"/>
    <property type="project" value="UniProtKB-SubCell"/>
</dbReference>
<dbReference type="GO" id="GO:0005524">
    <property type="term" value="F:ATP binding"/>
    <property type="evidence" value="ECO:0007669"/>
    <property type="project" value="UniProtKB-UniRule"/>
</dbReference>
<dbReference type="GO" id="GO:0004817">
    <property type="term" value="F:cysteine-tRNA ligase activity"/>
    <property type="evidence" value="ECO:0007669"/>
    <property type="project" value="UniProtKB-UniRule"/>
</dbReference>
<dbReference type="GO" id="GO:0008270">
    <property type="term" value="F:zinc ion binding"/>
    <property type="evidence" value="ECO:0007669"/>
    <property type="project" value="UniProtKB-UniRule"/>
</dbReference>
<dbReference type="GO" id="GO:0006423">
    <property type="term" value="P:cysteinyl-tRNA aminoacylation"/>
    <property type="evidence" value="ECO:0007669"/>
    <property type="project" value="UniProtKB-UniRule"/>
</dbReference>
<dbReference type="CDD" id="cd00672">
    <property type="entry name" value="CysRS_core"/>
    <property type="match status" value="1"/>
</dbReference>
<dbReference type="FunFam" id="3.40.50.620:FF:000009">
    <property type="entry name" value="Cysteine--tRNA ligase"/>
    <property type="match status" value="1"/>
</dbReference>
<dbReference type="Gene3D" id="1.20.120.1910">
    <property type="entry name" value="Cysteine-tRNA ligase, C-terminal anti-codon recognition domain"/>
    <property type="match status" value="1"/>
</dbReference>
<dbReference type="Gene3D" id="3.40.50.620">
    <property type="entry name" value="HUPs"/>
    <property type="match status" value="1"/>
</dbReference>
<dbReference type="HAMAP" id="MF_00041">
    <property type="entry name" value="Cys_tRNA_synth"/>
    <property type="match status" value="1"/>
</dbReference>
<dbReference type="InterPro" id="IPR015803">
    <property type="entry name" value="Cys-tRNA-ligase"/>
</dbReference>
<dbReference type="InterPro" id="IPR015273">
    <property type="entry name" value="Cys-tRNA-synt_Ia_DALR"/>
</dbReference>
<dbReference type="InterPro" id="IPR024909">
    <property type="entry name" value="Cys-tRNA/MSH_ligase"/>
</dbReference>
<dbReference type="InterPro" id="IPR014729">
    <property type="entry name" value="Rossmann-like_a/b/a_fold"/>
</dbReference>
<dbReference type="InterPro" id="IPR032678">
    <property type="entry name" value="tRNA-synt_1_cat_dom"/>
</dbReference>
<dbReference type="InterPro" id="IPR009080">
    <property type="entry name" value="tRNAsynth_Ia_anticodon-bd"/>
</dbReference>
<dbReference type="NCBIfam" id="TIGR00435">
    <property type="entry name" value="cysS"/>
    <property type="match status" value="1"/>
</dbReference>
<dbReference type="PANTHER" id="PTHR10890:SF3">
    <property type="entry name" value="CYSTEINE--TRNA LIGASE, CYTOPLASMIC"/>
    <property type="match status" value="1"/>
</dbReference>
<dbReference type="PANTHER" id="PTHR10890">
    <property type="entry name" value="CYSTEINYL-TRNA SYNTHETASE"/>
    <property type="match status" value="1"/>
</dbReference>
<dbReference type="Pfam" id="PF09190">
    <property type="entry name" value="DALR_2"/>
    <property type="match status" value="1"/>
</dbReference>
<dbReference type="Pfam" id="PF01406">
    <property type="entry name" value="tRNA-synt_1e"/>
    <property type="match status" value="1"/>
</dbReference>
<dbReference type="PRINTS" id="PR00983">
    <property type="entry name" value="TRNASYNTHCYS"/>
</dbReference>
<dbReference type="SMART" id="SM00840">
    <property type="entry name" value="DALR_2"/>
    <property type="match status" value="1"/>
</dbReference>
<dbReference type="SUPFAM" id="SSF47323">
    <property type="entry name" value="Anticodon-binding domain of a subclass of class I aminoacyl-tRNA synthetases"/>
    <property type="match status" value="1"/>
</dbReference>
<dbReference type="SUPFAM" id="SSF52374">
    <property type="entry name" value="Nucleotidylyl transferase"/>
    <property type="match status" value="1"/>
</dbReference>
<accession>O29836</accession>
<organism>
    <name type="scientific">Archaeoglobus fulgidus (strain ATCC 49558 / DSM 4304 / JCM 9628 / NBRC 100126 / VC-16)</name>
    <dbReference type="NCBI Taxonomy" id="224325"/>
    <lineage>
        <taxon>Archaea</taxon>
        <taxon>Methanobacteriati</taxon>
        <taxon>Methanobacteriota</taxon>
        <taxon>Archaeoglobi</taxon>
        <taxon>Archaeoglobales</taxon>
        <taxon>Archaeoglobaceae</taxon>
        <taxon>Archaeoglobus</taxon>
    </lineage>
</organism>
<reference key="1">
    <citation type="journal article" date="1997" name="Nature">
        <title>The complete genome sequence of the hyperthermophilic, sulphate-reducing archaeon Archaeoglobus fulgidus.</title>
        <authorList>
            <person name="Klenk H.-P."/>
            <person name="Clayton R.A."/>
            <person name="Tomb J.-F."/>
            <person name="White O."/>
            <person name="Nelson K.E."/>
            <person name="Ketchum K.A."/>
            <person name="Dodson R.J."/>
            <person name="Gwinn M.L."/>
            <person name="Hickey E.K."/>
            <person name="Peterson J.D."/>
            <person name="Richardson D.L."/>
            <person name="Kerlavage A.R."/>
            <person name="Graham D.E."/>
            <person name="Kyrpides N.C."/>
            <person name="Fleischmann R.D."/>
            <person name="Quackenbush J."/>
            <person name="Lee N.H."/>
            <person name="Sutton G.G."/>
            <person name="Gill S.R."/>
            <person name="Kirkness E.F."/>
            <person name="Dougherty B.A."/>
            <person name="McKenney K."/>
            <person name="Adams M.D."/>
            <person name="Loftus B.J."/>
            <person name="Peterson S.N."/>
            <person name="Reich C.I."/>
            <person name="McNeil L.K."/>
            <person name="Badger J.H."/>
            <person name="Glodek A."/>
            <person name="Zhou L."/>
            <person name="Overbeek R."/>
            <person name="Gocayne J.D."/>
            <person name="Weidman J.F."/>
            <person name="McDonald L.A."/>
            <person name="Utterback T.R."/>
            <person name="Cotton M.D."/>
            <person name="Spriggs T."/>
            <person name="Artiach P."/>
            <person name="Kaine B.P."/>
            <person name="Sykes S.M."/>
            <person name="Sadow P.W."/>
            <person name="D'Andrea K.P."/>
            <person name="Bowman C."/>
            <person name="Fujii C."/>
            <person name="Garland S.A."/>
            <person name="Mason T.M."/>
            <person name="Olsen G.J."/>
            <person name="Fraser C.M."/>
            <person name="Smith H.O."/>
            <person name="Woese C.R."/>
            <person name="Venter J.C."/>
        </authorList>
    </citation>
    <scope>NUCLEOTIDE SEQUENCE [LARGE SCALE GENOMIC DNA]</scope>
    <source>
        <strain>ATCC 49558 / DSM 4304 / JCM 9628 / NBRC 100126 / VC-16</strain>
    </source>
</reference>